<feature type="chain" id="PRO_0000068701" description="Bifunctional protein GlmU">
    <location>
        <begin position="1"/>
        <end position="456"/>
    </location>
</feature>
<feature type="region of interest" description="Pyrophosphorylase" evidence="1 2 8">
    <location>
        <begin position="1"/>
        <end position="229"/>
    </location>
</feature>
<feature type="region of interest" description="Linker" evidence="1 2 8">
    <location>
        <begin position="230"/>
        <end position="250"/>
    </location>
</feature>
<feature type="region of interest" description="N-acetyltransferase" evidence="1 2 8">
    <location>
        <begin position="251"/>
        <end position="456"/>
    </location>
</feature>
<feature type="active site" description="Proton acceptor" evidence="1">
    <location>
        <position position="363"/>
    </location>
</feature>
<feature type="binding site" evidence="1 2 3 4">
    <location>
        <begin position="11"/>
        <end position="14"/>
    </location>
    <ligand>
        <name>UDP-N-acetyl-alpha-D-glucosamine</name>
        <dbReference type="ChEBI" id="CHEBI:57705"/>
    </ligand>
</feature>
<feature type="binding site" evidence="1">
    <location>
        <position position="25"/>
    </location>
    <ligand>
        <name>UDP-N-acetyl-alpha-D-glucosamine</name>
        <dbReference type="ChEBI" id="CHEBI:57705"/>
    </ligand>
</feature>
<feature type="binding site" evidence="1 2 3 4">
    <location>
        <position position="76"/>
    </location>
    <ligand>
        <name>UDP-N-acetyl-alpha-D-glucosamine</name>
        <dbReference type="ChEBI" id="CHEBI:57705"/>
    </ligand>
</feature>
<feature type="binding site" evidence="1 2 3 4">
    <location>
        <begin position="81"/>
        <end position="82"/>
    </location>
    <ligand>
        <name>UDP-N-acetyl-alpha-D-glucosamine</name>
        <dbReference type="ChEBI" id="CHEBI:57705"/>
    </ligand>
</feature>
<feature type="binding site" evidence="1 2 3 4">
    <location>
        <begin position="103"/>
        <end position="105"/>
    </location>
    <ligand>
        <name>UDP-N-acetyl-alpha-D-glucosamine</name>
        <dbReference type="ChEBI" id="CHEBI:57705"/>
    </ligand>
</feature>
<feature type="binding site" evidence="3 11">
    <location>
        <position position="105"/>
    </location>
    <ligand>
        <name>Co(2+)</name>
        <dbReference type="ChEBI" id="CHEBI:48828"/>
    </ligand>
</feature>
<feature type="binding site" evidence="4 12">
    <location>
        <position position="105"/>
    </location>
    <ligand>
        <name>Mg(2+)</name>
        <dbReference type="ChEBI" id="CHEBI:18420"/>
    </ligand>
</feature>
<feature type="binding site" evidence="1 2 3 4">
    <location>
        <position position="140"/>
    </location>
    <ligand>
        <name>UDP-N-acetyl-alpha-D-glucosamine</name>
        <dbReference type="ChEBI" id="CHEBI:57705"/>
    </ligand>
</feature>
<feature type="binding site" evidence="1 2 3 4">
    <location>
        <position position="154"/>
    </location>
    <ligand>
        <name>UDP-N-acetyl-alpha-D-glucosamine</name>
        <dbReference type="ChEBI" id="CHEBI:57705"/>
    </ligand>
</feature>
<feature type="binding site" evidence="1 2 3 4">
    <location>
        <position position="169"/>
    </location>
    <ligand>
        <name>UDP-N-acetyl-alpha-D-glucosamine</name>
        <dbReference type="ChEBI" id="CHEBI:57705"/>
    </ligand>
</feature>
<feature type="binding site" evidence="3 11">
    <location>
        <position position="227"/>
    </location>
    <ligand>
        <name>Co(2+)</name>
        <dbReference type="ChEBI" id="CHEBI:48828"/>
    </ligand>
</feature>
<feature type="binding site" evidence="4 12">
    <location>
        <position position="227"/>
    </location>
    <ligand>
        <name>Mg(2+)</name>
        <dbReference type="ChEBI" id="CHEBI:18420"/>
    </ligand>
</feature>
<feature type="binding site" evidence="1">
    <location>
        <position position="227"/>
    </location>
    <ligand>
        <name>UDP-N-acetyl-alpha-D-glucosamine</name>
        <dbReference type="ChEBI" id="CHEBI:57705"/>
    </ligand>
</feature>
<feature type="binding site" evidence="1 3 4">
    <location>
        <position position="333"/>
    </location>
    <ligand>
        <name>UDP-N-acetyl-alpha-D-glucosamine</name>
        <dbReference type="ChEBI" id="CHEBI:57705"/>
    </ligand>
</feature>
<feature type="binding site" evidence="1 3 4">
    <location>
        <position position="351"/>
    </location>
    <ligand>
        <name>UDP-N-acetyl-alpha-D-glucosamine</name>
        <dbReference type="ChEBI" id="CHEBI:57705"/>
    </ligand>
</feature>
<feature type="binding site" evidence="1 3 4">
    <location>
        <position position="366"/>
    </location>
    <ligand>
        <name>UDP-N-acetyl-alpha-D-glucosamine</name>
        <dbReference type="ChEBI" id="CHEBI:57705"/>
    </ligand>
</feature>
<feature type="binding site" evidence="1 3 4 5">
    <location>
        <position position="377"/>
    </location>
    <ligand>
        <name>UDP-N-acetyl-alpha-D-glucosamine</name>
        <dbReference type="ChEBI" id="CHEBI:57705"/>
    </ligand>
</feature>
<feature type="binding site" evidence="1 4 5">
    <location>
        <position position="380"/>
    </location>
    <ligand>
        <name>acetyl-CoA</name>
        <dbReference type="ChEBI" id="CHEBI:57288"/>
    </ligand>
</feature>
<feature type="binding site" evidence="1">
    <location>
        <begin position="386"/>
        <end position="387"/>
    </location>
    <ligand>
        <name>acetyl-CoA</name>
        <dbReference type="ChEBI" id="CHEBI:57288"/>
    </ligand>
</feature>
<feature type="binding site" evidence="1 3 4 5">
    <location>
        <position position="405"/>
    </location>
    <ligand>
        <name>acetyl-CoA</name>
        <dbReference type="ChEBI" id="CHEBI:57288"/>
    </ligand>
</feature>
<feature type="binding site" evidence="1 3 4 5">
    <location>
        <position position="423"/>
    </location>
    <ligand>
        <name>acetyl-CoA</name>
        <dbReference type="ChEBI" id="CHEBI:57288"/>
    </ligand>
</feature>
<feature type="binding site" evidence="1 3 4 5">
    <location>
        <position position="440"/>
    </location>
    <ligand>
        <name>acetyl-CoA</name>
        <dbReference type="ChEBI" id="CHEBI:57288"/>
    </ligand>
</feature>
<feature type="mutagenesis site" description="8-fold decrease in uridyltransferase activity. Creates steric conflict and decreases affinity for UTP." evidence="2">
    <original>G</original>
    <variation>A</variation>
    <location>
        <position position="14"/>
    </location>
</feature>
<feature type="mutagenesis site" description="Dramatically impairs the uridyltransferase activity." evidence="2">
    <original>R</original>
    <variation>A</variation>
    <location>
        <position position="18"/>
    </location>
</feature>
<feature type="mutagenesis site" description="8-fold decrease in uridyltransferase activity." evidence="2">
    <original>K</original>
    <variation>A</variation>
    <location>
        <position position="25"/>
    </location>
</feature>
<feature type="mutagenesis site" description="No effect." evidence="9">
    <original>C</original>
    <variation>A</variation>
    <location>
        <position position="296"/>
    </location>
</feature>
<feature type="mutagenesis site" description="1350-fold decrease in acetyltransferase activity." evidence="9">
    <original>C</original>
    <variation>A</variation>
    <location>
        <position position="307"/>
    </location>
</feature>
<feature type="mutagenesis site" description="8-fold decrease in acetyltransferase activity." evidence="9">
    <original>C</original>
    <variation>A</variation>
    <location>
        <position position="324"/>
    </location>
</feature>
<feature type="mutagenesis site" description="No effect." evidence="9">
    <original>C</original>
    <variation>A</variation>
    <location>
        <position position="385"/>
    </location>
</feature>
<feature type="sequence conflict" description="In Ref. 1; CAA25784." evidence="10" ref="1">
    <original>KL</original>
    <variation>NV</variation>
    <location>
        <begin position="186"/>
        <end position="187"/>
    </location>
</feature>
<feature type="strand" evidence="16">
    <location>
        <begin position="6"/>
        <end position="12"/>
    </location>
</feature>
<feature type="helix" evidence="16">
    <location>
        <begin position="17"/>
        <end position="19"/>
    </location>
</feature>
<feature type="helix" evidence="16">
    <location>
        <begin position="25"/>
        <end position="27"/>
    </location>
</feature>
<feature type="strand" evidence="16">
    <location>
        <begin position="28"/>
        <end position="30"/>
    </location>
</feature>
<feature type="helix" evidence="16">
    <location>
        <begin position="35"/>
        <end position="46"/>
    </location>
</feature>
<feature type="strand" evidence="16">
    <location>
        <begin position="51"/>
        <end position="55"/>
    </location>
</feature>
<feature type="helix" evidence="16">
    <location>
        <begin position="59"/>
        <end position="65"/>
    </location>
</feature>
<feature type="turn" evidence="15">
    <location>
        <begin position="66"/>
        <end position="68"/>
    </location>
</feature>
<feature type="strand" evidence="16">
    <location>
        <begin position="71"/>
        <end position="75"/>
    </location>
</feature>
<feature type="helix" evidence="16">
    <location>
        <begin position="82"/>
        <end position="89"/>
    </location>
</feature>
<feature type="helix" evidence="16">
    <location>
        <begin position="90"/>
        <end position="92"/>
    </location>
</feature>
<feature type="strand" evidence="16">
    <location>
        <begin position="97"/>
        <end position="103"/>
    </location>
</feature>
<feature type="helix" evidence="16">
    <location>
        <begin position="111"/>
        <end position="120"/>
    </location>
</feature>
<feature type="strand" evidence="16">
    <location>
        <begin position="125"/>
        <end position="132"/>
    </location>
</feature>
<feature type="strand" evidence="16">
    <location>
        <begin position="141"/>
        <end position="145"/>
    </location>
</feature>
<feature type="strand" evidence="16">
    <location>
        <begin position="148"/>
        <end position="153"/>
    </location>
</feature>
<feature type="turn" evidence="16">
    <location>
        <begin position="155"/>
        <end position="157"/>
    </location>
</feature>
<feature type="helix" evidence="16">
    <location>
        <begin position="162"/>
        <end position="164"/>
    </location>
</feature>
<feature type="strand" evidence="16">
    <location>
        <begin position="167"/>
        <end position="176"/>
    </location>
</feature>
<feature type="helix" evidence="16">
    <location>
        <begin position="177"/>
        <end position="184"/>
    </location>
</feature>
<feature type="strand" evidence="16">
    <location>
        <begin position="191"/>
        <end position="193"/>
    </location>
</feature>
<feature type="helix" evidence="16">
    <location>
        <begin position="198"/>
        <end position="200"/>
    </location>
</feature>
<feature type="helix" evidence="16">
    <location>
        <begin position="201"/>
        <end position="206"/>
    </location>
</feature>
<feature type="turn" evidence="16">
    <location>
        <begin position="207"/>
        <end position="209"/>
    </location>
</feature>
<feature type="strand" evidence="16">
    <location>
        <begin position="212"/>
        <end position="215"/>
    </location>
</feature>
<feature type="helix" evidence="16">
    <location>
        <begin position="220"/>
        <end position="223"/>
    </location>
</feature>
<feature type="helix" evidence="18">
    <location>
        <begin position="233"/>
        <end position="249"/>
    </location>
</feature>
<feature type="strand" evidence="18">
    <location>
        <begin position="253"/>
        <end position="255"/>
    </location>
</feature>
<feature type="helix" evidence="18">
    <location>
        <begin position="257"/>
        <end position="259"/>
    </location>
</feature>
<feature type="strand" evidence="18">
    <location>
        <begin position="260"/>
        <end position="268"/>
    </location>
</feature>
<feature type="strand" evidence="18">
    <location>
        <begin position="278"/>
        <end position="286"/>
    </location>
</feature>
<feature type="strand" evidence="18">
    <location>
        <begin position="297"/>
        <end position="300"/>
    </location>
</feature>
<feature type="strand" evidence="18">
    <location>
        <begin position="314"/>
        <end position="317"/>
    </location>
</feature>
<feature type="strand" evidence="15">
    <location>
        <begin position="325"/>
        <end position="327"/>
    </location>
</feature>
<feature type="strand" evidence="18">
    <location>
        <begin position="328"/>
        <end position="332"/>
    </location>
</feature>
<feature type="strand" evidence="19">
    <location>
        <begin position="336"/>
        <end position="338"/>
    </location>
</feature>
<feature type="strand" evidence="18">
    <location>
        <begin position="343"/>
        <end position="355"/>
    </location>
</feature>
<feature type="strand" evidence="18">
    <location>
        <begin position="360"/>
        <end position="372"/>
    </location>
</feature>
<feature type="strand" evidence="18">
    <location>
        <begin position="383"/>
        <end position="385"/>
    </location>
</feature>
<feature type="strand" evidence="17">
    <location>
        <begin position="387"/>
        <end position="390"/>
    </location>
</feature>
<feature type="strand" evidence="18">
    <location>
        <begin position="395"/>
        <end position="397"/>
    </location>
</feature>
<feature type="strand" evidence="18">
    <location>
        <begin position="408"/>
        <end position="415"/>
    </location>
</feature>
<gene>
    <name evidence="1" type="primary">glmU</name>
    <name type="synonym">yieA</name>
    <name type="ordered locus">b3730</name>
    <name type="ordered locus">JW3708</name>
</gene>
<protein>
    <recommendedName>
        <fullName evidence="1">Bifunctional protein GlmU</fullName>
    </recommendedName>
    <domain>
        <recommendedName>
            <fullName evidence="1">UDP-N-acetylglucosamine pyrophosphorylase</fullName>
            <ecNumber evidence="1 2 7 8">2.7.7.23</ecNumber>
        </recommendedName>
        <alternativeName>
            <fullName evidence="1">N-acetylglucosamine-1-phosphate uridyltransferase</fullName>
        </alternativeName>
    </domain>
    <domain>
        <recommendedName>
            <fullName evidence="1">Glucosamine-1-phosphate N-acetyltransferase</fullName>
            <ecNumber evidence="1 2 7 8">2.3.1.157</ecNumber>
        </recommendedName>
    </domain>
</protein>
<sequence>MLNNAMSVVILAAGKGTRMYSDLPKVLHTLAGKAMVQHVIDAANELGAAHVHLVYGHGGDLLKQALKDDNLNWVLQAEQLGTGHAMQQAAPFFADDEDILMLYGDVPLISVETLQRLRDAKPQGGIGLLTVKLDDPTGYGRITRENGKVTGIVEHKDATDEQRQIQEINTGILIANGADMKRWLAKLTNNNAQGEYYITDIIALAYQEGREIVAVHPQRLSEVEGVNNRLQLSRLERVYQSEQAEKLLLAGVMLRDPARFDLRGTLTHGRDVEIDTNVIIEGNVTLGHRVKIGTGCVIKNSVIGDDCEISPYTVVEDANLAAACTIGPFARLRPGAELLEGAHVGNFVEMKKARLGKGSKAGHLTYLGDAEIGDNVNIGAGTITCNYDGANKFKTIIGDDVFVGSDTQLVAPVTVGKGATIAAGTTVTRNVGENALAISRVPQTQKEGWRRPVKKK</sequence>
<evidence type="ECO:0000255" key="1">
    <source>
        <dbReference type="HAMAP-Rule" id="MF_01631"/>
    </source>
</evidence>
<evidence type="ECO:0000269" key="2">
    <source>
    </source>
</evidence>
<evidence type="ECO:0000269" key="3">
    <source>
    </source>
</evidence>
<evidence type="ECO:0000269" key="4">
    <source>
    </source>
</evidence>
<evidence type="ECO:0000269" key="5">
    <source>
    </source>
</evidence>
<evidence type="ECO:0000269" key="6">
    <source>
    </source>
</evidence>
<evidence type="ECO:0000269" key="7">
    <source>
    </source>
</evidence>
<evidence type="ECO:0000269" key="8">
    <source>
    </source>
</evidence>
<evidence type="ECO:0000269" key="9">
    <source>
    </source>
</evidence>
<evidence type="ECO:0000305" key="10"/>
<evidence type="ECO:0007744" key="11">
    <source>
        <dbReference type="PDB" id="1HV9"/>
    </source>
</evidence>
<evidence type="ECO:0007744" key="12">
    <source>
        <dbReference type="PDB" id="2OI5"/>
    </source>
</evidence>
<evidence type="ECO:0007744" key="13">
    <source>
        <dbReference type="PDB" id="2OI6"/>
    </source>
</evidence>
<evidence type="ECO:0007744" key="14">
    <source>
        <dbReference type="PDB" id="2OI7"/>
    </source>
</evidence>
<evidence type="ECO:0007829" key="15">
    <source>
        <dbReference type="PDB" id="1FXJ"/>
    </source>
</evidence>
<evidence type="ECO:0007829" key="16">
    <source>
        <dbReference type="PDB" id="1HV9"/>
    </source>
</evidence>
<evidence type="ECO:0007829" key="17">
    <source>
        <dbReference type="PDB" id="2OI6"/>
    </source>
</evidence>
<evidence type="ECO:0007829" key="18">
    <source>
        <dbReference type="PDB" id="3TWD"/>
    </source>
</evidence>
<evidence type="ECO:0007829" key="19">
    <source>
        <dbReference type="PDB" id="4AA7"/>
    </source>
</evidence>
<proteinExistence type="evidence at protein level"/>
<name>GLMU_ECOLI</name>
<organism>
    <name type="scientific">Escherichia coli (strain K12)</name>
    <dbReference type="NCBI Taxonomy" id="83333"/>
    <lineage>
        <taxon>Bacteria</taxon>
        <taxon>Pseudomonadati</taxon>
        <taxon>Pseudomonadota</taxon>
        <taxon>Gammaproteobacteria</taxon>
        <taxon>Enterobacterales</taxon>
        <taxon>Enterobacteriaceae</taxon>
        <taxon>Escherichia</taxon>
    </lineage>
</organism>
<reference key="1">
    <citation type="journal article" date="1984" name="Biochem. J.">
        <title>DNA sequence around the Escherichia coli unc operon. Completion of the sequence of a 17 kilobase segment containing asnA, oriC, unc, glmS and phoS.</title>
        <authorList>
            <person name="Walker J.E."/>
            <person name="Gay N.J."/>
            <person name="Saraste M."/>
            <person name="Eberle A.N."/>
        </authorList>
    </citation>
    <scope>NUCLEOTIDE SEQUENCE [GENOMIC DNA]</scope>
</reference>
<reference key="2">
    <citation type="journal article" date="1993" name="Genomics">
        <title>DNA sequence and analysis of 136 kilobases of the Escherichia coli genome: organizational symmetry around the origin of replication.</title>
        <authorList>
            <person name="Burland V.D."/>
            <person name="Plunkett G. III"/>
            <person name="Daniels D.L."/>
            <person name="Blattner F.R."/>
        </authorList>
    </citation>
    <scope>NUCLEOTIDE SEQUENCE [LARGE SCALE GENOMIC DNA]</scope>
    <source>
        <strain>K12 / MG1655 / ATCC 47076</strain>
    </source>
</reference>
<reference key="3">
    <citation type="journal article" date="1997" name="Science">
        <title>The complete genome sequence of Escherichia coli K-12.</title>
        <authorList>
            <person name="Blattner F.R."/>
            <person name="Plunkett G. III"/>
            <person name="Bloch C.A."/>
            <person name="Perna N.T."/>
            <person name="Burland V."/>
            <person name="Riley M."/>
            <person name="Collado-Vides J."/>
            <person name="Glasner J.D."/>
            <person name="Rode C.K."/>
            <person name="Mayhew G.F."/>
            <person name="Gregor J."/>
            <person name="Davis N.W."/>
            <person name="Kirkpatrick H.A."/>
            <person name="Goeden M.A."/>
            <person name="Rose D.J."/>
            <person name="Mau B."/>
            <person name="Shao Y."/>
        </authorList>
    </citation>
    <scope>NUCLEOTIDE SEQUENCE [LARGE SCALE GENOMIC DNA]</scope>
    <scope>SEQUENCE REVISION</scope>
    <source>
        <strain>K12 / MG1655 / ATCC 47076</strain>
    </source>
</reference>
<reference key="4">
    <citation type="journal article" date="2006" name="Mol. Syst. Biol.">
        <title>Highly accurate genome sequences of Escherichia coli K-12 strains MG1655 and W3110.</title>
        <authorList>
            <person name="Hayashi K."/>
            <person name="Morooka N."/>
            <person name="Yamamoto Y."/>
            <person name="Fujita K."/>
            <person name="Isono K."/>
            <person name="Choi S."/>
            <person name="Ohtsubo E."/>
            <person name="Baba T."/>
            <person name="Wanner B.L."/>
            <person name="Mori H."/>
            <person name="Horiuchi T."/>
        </authorList>
    </citation>
    <scope>NUCLEOTIDE SEQUENCE [LARGE SCALE GENOMIC DNA]</scope>
    <source>
        <strain>K12 / W3110 / ATCC 27325 / DSM 5911</strain>
    </source>
</reference>
<reference key="5">
    <citation type="journal article" date="1993" name="J. Bacteriol.">
        <title>Identification of the glmU gene encoding N-acetylglucosamine-1-phosphate uridyltransferase in Escherichia coli.</title>
        <authorList>
            <person name="Mengin-Lecreulx D."/>
            <person name="van Heijenoort J."/>
        </authorList>
    </citation>
    <scope>IDENTIFICATION</scope>
</reference>
<reference key="6">
    <citation type="journal article" date="1994" name="J. Bacteriol.">
        <title>Copurification of glucosamine-1-phosphate acetyltransferase and N-acetylglucosamine-1-phosphate uridyltransferase activities of Escherichia coli: characterization of the glmU gene product as a bifunctional enzyme catalyzing two subsequent steps in the pathway for UDP-N-acetylglucosamine synthesis.</title>
        <authorList>
            <person name="Mengin-Lecreulx D."/>
            <person name="van Heijenoort J."/>
        </authorList>
    </citation>
    <scope>FUNCTION</scope>
    <scope>CATALYTIC ACTIVITY</scope>
    <scope>BIOPHYSICOCHEMICAL PROPERTIES</scope>
    <scope>ACTIVITY REGULATION</scope>
</reference>
<reference key="7">
    <citation type="journal article" date="1996" name="Biochemistry">
        <title>Acetyltransfer precedes uridylyltransfer in the formation of UDP-N-acetylglucosamine in separable active sites of the bifunctional GlmU protein of Escherichia coli.</title>
        <authorList>
            <person name="Gehring A.M."/>
            <person name="Lees W.J."/>
            <person name="Mindiola D.J."/>
            <person name="Walsh C.T."/>
            <person name="Brown E.D."/>
        </authorList>
    </citation>
    <scope>FUNCTION</scope>
    <scope>CATALYTIC ACTIVITY</scope>
    <scope>SUBSTRATE SPECIFICITY</scope>
    <scope>BIOPHYSICOCHEMICAL PROPERTIES</scope>
</reference>
<reference key="8">
    <citation type="journal article" date="1998" name="J. Bacteriol.">
        <title>Probing the role of cysteine residues in glucosamine-1-phosphate acetyltransferase activity of the bifunctional protein glmU from Escherichia coli: site-directed mutagenesis and characterization of the mutant enzymes.</title>
        <authorList>
            <person name="Pompeo F."/>
            <person name="van Heijenoort J."/>
            <person name="Mengin-Lecreulx D."/>
        </authorList>
    </citation>
    <scope>MUTAGENESIS OF CYS-296; CYS-307; CYS-324 AND CYS-385</scope>
    <scope>BIOPHYSICOCHEMICAL PROPERTIES</scope>
</reference>
<reference key="9">
    <citation type="journal article" date="1999" name="EMBO J.">
        <title>Crystal structure of the bifunctional N-acetylglucosamine 1-phosphate uridyltransferase from Escherichia coli: a paradigm for the related pyrophosphorylase superfamily.</title>
        <authorList>
            <person name="Brown K."/>
            <person name="Pompeo F."/>
            <person name="Dixon S."/>
            <person name="Mengin-Lecreulx D."/>
            <person name="Cambillau C."/>
            <person name="Bourne Y."/>
        </authorList>
    </citation>
    <scope>X-RAY CRYSTALLOGRAPHY (2.25 ANGSTROMS) OF THE TRUNCATED FORM AND IN COMPLEX WITH UDP-GLCNAC</scope>
    <scope>FUNCTION</scope>
    <scope>CATALYTIC ACTIVITY</scope>
    <scope>BIOPHYSICOCHEMICAL PROPERTIES</scope>
    <scope>MUTAGENESIS OF GLY-14; ARG-18 AND LYS-25</scope>
    <scope>SUBCELLULAR LOCATION</scope>
    <scope>SUBUNIT</scope>
</reference>
<reference evidence="11" key="10">
    <citation type="journal article" date="2001" name="Biochemistry">
        <title>Structure of the Escherichia coli glmU pyrophosphorylase and acetyltransferase active sites.</title>
        <authorList>
            <person name="Olsen L.R."/>
            <person name="Roderick S.L."/>
        </authorList>
    </citation>
    <scope>X-RAY CRYSTALLOGRAPHY (2.1 ANGSTROMS) IN COMPLEX WITH UDP-GLCNAC; COA AND COBALT ION</scope>
    <scope>COFACTOR</scope>
    <scope>SUBUNIT</scope>
</reference>
<reference evidence="12 13 14" key="11">
    <citation type="journal article" date="2007" name="Protein Sci.">
        <title>Structure of the E. coli bifunctional GlmU acetyltransferase active site with substrates and products.</title>
        <authorList>
            <person name="Olsen L.R."/>
            <person name="Vetting M.W."/>
            <person name="Roderick S.L."/>
        </authorList>
    </citation>
    <scope>X-RAY CRYSTALLOGRAPHY (2.25 ANGSTROMS) IN COMPLEX WITH UDP-GLCNAC</scope>
    <scope>COA AND MAGNESIUM IONS</scope>
    <scope>COFACTOR</scope>
    <scope>SUBUNIT</scope>
</reference>
<reference key="12">
    <citation type="journal article" date="2011" name="J. Biol. Chem.">
        <title>In vitro validation of acetyltransferase activity of GlmU as an antibacterial target in Haemophilus influenzae.</title>
        <authorList>
            <person name="Buurman E.T."/>
            <person name="Andrews B."/>
            <person name="Gao N."/>
            <person name="Hu J."/>
            <person name="Keating T.A."/>
            <person name="Lahiri S."/>
            <person name="Otterbein L.R."/>
            <person name="Patten A.D."/>
            <person name="Stokes S.S."/>
            <person name="Shapiro A.B."/>
        </authorList>
    </citation>
    <scope>X-RAY CRYSTALLOGRAPHY (1.9 ANGSTROMS) OF 233-452 ACETYL-COA ANALOG</scope>
    <scope>FUNCTION</scope>
    <scope>ACTIVITY REGULATION</scope>
    <scope>SUBUNIT</scope>
</reference>
<reference key="13">
    <citation type="journal article" date="2012" name="Bioorg. Med. Chem. Lett.">
        <title>Inhibitors of acetyltransferase domain of N-acetylglucosamine-1-phosphate-uridyltransferase/glucosamine-1-phosphate-acetyltransferase (GlmU). Part 1: Hit to lead evaluation of a novel arylsulfonamide series.</title>
        <authorList>
            <person name="Green O.M."/>
            <person name="McKenzie A.R."/>
            <person name="Shapiro A.B."/>
            <person name="Otterbein L."/>
            <person name="Ni H."/>
            <person name="Patten A."/>
            <person name="Stokes S."/>
            <person name="Albert R."/>
            <person name="Kawatkar S."/>
            <person name="Breed J."/>
        </authorList>
    </citation>
    <scope>X-RAY CRYSTALLOGRAPHY (2.0 ANGSTROMS) OF 227-456</scope>
    <scope>FUNCTION</scope>
    <scope>ACTIVITY REGULATION</scope>
    <scope>SUBUNIT</scope>
</reference>
<accession>P0ACC7</accession>
<accession>P17114</accession>
<accession>P76746</accession>
<accession>Q2M848</accession>
<comment type="function">
    <text evidence="1 2 5 6 7 8">Catalyzes the last two sequential reactions in the de novo biosynthetic pathway for UDP-N-acetylglucosamine (UDP-GlcNAc). The C-terminal domain catalyzes the transfer of acetyl group from acetyl coenzyme A to glucosamine-1-phosphate (GlcN-1-P) to produce N-acetylglucosamine-1-phosphate (GlcNAc-1-P), which is converted into UDP-GlcNAc by the transfer of uridine 5-monophosphate (from uridine 5-triphosphate), a reaction catalyzed by the N-terminal domain.</text>
</comment>
<comment type="catalytic activity">
    <reaction evidence="1 2 7 8">
        <text>alpha-D-glucosamine 1-phosphate + acetyl-CoA = N-acetyl-alpha-D-glucosamine 1-phosphate + CoA + H(+)</text>
        <dbReference type="Rhea" id="RHEA:13725"/>
        <dbReference type="ChEBI" id="CHEBI:15378"/>
        <dbReference type="ChEBI" id="CHEBI:57287"/>
        <dbReference type="ChEBI" id="CHEBI:57288"/>
        <dbReference type="ChEBI" id="CHEBI:57776"/>
        <dbReference type="ChEBI" id="CHEBI:58516"/>
        <dbReference type="EC" id="2.3.1.157"/>
    </reaction>
</comment>
<comment type="catalytic activity">
    <reaction evidence="1 2 7 8">
        <text>N-acetyl-alpha-D-glucosamine 1-phosphate + UTP + H(+) = UDP-N-acetyl-alpha-D-glucosamine + diphosphate</text>
        <dbReference type="Rhea" id="RHEA:13509"/>
        <dbReference type="ChEBI" id="CHEBI:15378"/>
        <dbReference type="ChEBI" id="CHEBI:33019"/>
        <dbReference type="ChEBI" id="CHEBI:46398"/>
        <dbReference type="ChEBI" id="CHEBI:57705"/>
        <dbReference type="ChEBI" id="CHEBI:57776"/>
        <dbReference type="EC" id="2.7.7.23"/>
    </reaction>
</comment>
<comment type="cofactor">
    <cofactor evidence="4">
        <name>Mg(2+)</name>
        <dbReference type="ChEBI" id="CHEBI:18420"/>
    </cofactor>
    <cofactor evidence="3">
        <name>Co(2+)</name>
        <dbReference type="ChEBI" id="CHEBI:48828"/>
    </cofactor>
    <text evidence="3 4">Binds 1 Mg(2+) ion per subunit (PubMed:17473010). Can also use Co(2+) ion to a lesser extent (PubMed:11329257).</text>
</comment>
<comment type="activity regulation">
    <text evidence="5 6 7">Inhibited by its reaction product N-acetylglucosamine-1-phosphate and by UDP-N-acetylmuramic acid, which is one of the first precursors specific for the peptidoglycan pathway.</text>
</comment>
<comment type="biophysicochemical properties">
    <kinetics>
        <KM evidence="7 8 9">0.018 mM for N-acetylglucosamine 1-phosphate</KM>
        <KM evidence="2">0.07 mM for alpha-D-glucosamine 1-phosphate</KM>
        <KM evidence="2">0.1 mM for UTP</KM>
        <KM evidence="7 8 9">0.15 mM for alpha-D-glucosamine 1-phosphate</KM>
        <KM evidence="7 8 9">0.25 mM for alpha-D-glucosamine 1-phosphate</KM>
        <KM evidence="7 8 9">0.32 mM for acetyl-CoA</KM>
        <KM evidence="7 8 9">0.6 mM for acetyl-CoA</KM>
        <KM evidence="7 8 9">0.84 mM for n-propionyl-CoA</KM>
        <KM evidence="7 8 9">1.3 mM for UDP-glucosamine</KM>
        <KM evidence="7 8 9">2 mM for glucose-1-P</KM>
        <KM evidence="7 8 9">3.7 mM for N-acetylgalactosamine-1-P</KM>
        <KM evidence="7 8 9">15 mM for galactosamine-1-phosphate</KM>
    </kinetics>
</comment>
<comment type="pathway">
    <text evidence="1">Nucleotide-sugar biosynthesis; UDP-N-acetyl-alpha-D-glucosamine biosynthesis; N-acetyl-alpha-D-glucosamine 1-phosphate from alpha-D-glucosamine 6-phosphate (route II): step 2/2.</text>
</comment>
<comment type="pathway">
    <text evidence="1">Nucleotide-sugar biosynthesis; UDP-N-acetyl-alpha-D-glucosamine biosynthesis; UDP-N-acetyl-alpha-D-glucosamine from N-acetyl-alpha-D-glucosamine 1-phosphate: step 1/1.</text>
</comment>
<comment type="pathway">
    <text evidence="1">Bacterial outer membrane biogenesis; LPS lipid A biosynthesis.</text>
</comment>
<comment type="subunit">
    <text evidence="2 3 4 5 6">Homotrimer. In vivo forms a hexameric aggregate.</text>
</comment>
<comment type="interaction">
    <interactant intactId="EBI-370256">
        <id>P0ACC7</id>
    </interactant>
    <interactant intactId="EBI-543439">
        <id>P0A7V0</id>
        <label>rpsB</label>
    </interactant>
    <organismsDiffer>false</organismsDiffer>
    <experiments>2</experiments>
</comment>
<comment type="subcellular location">
    <subcellularLocation>
        <location evidence="1 2">Cytoplasm</location>
    </subcellularLocation>
</comment>
<comment type="similarity">
    <text evidence="1 10">In the N-terminal section; belongs to the N-acetylglucosamine-1-phosphate uridyltransferase family.</text>
</comment>
<comment type="similarity">
    <text evidence="1 10">In the C-terminal section; belongs to the transferase hexapeptide repeat family.</text>
</comment>
<comment type="sequence caution" evidence="10">
    <conflict type="frameshift">
        <sequence resource="EMBL-CDS" id="AAA62081"/>
    </conflict>
    <text>Produces two ORFs.</text>
</comment>
<comment type="sequence caution" evidence="10">
    <conflict type="frameshift">
        <sequence resource="EMBL-CDS" id="AAA62082"/>
    </conflict>
    <text>Produces two ORFs.</text>
</comment>
<dbReference type="EC" id="2.7.7.23" evidence="1 2 7 8"/>
<dbReference type="EC" id="2.3.1.157" evidence="1 2 7 8"/>
<dbReference type="EMBL" id="X01631">
    <property type="protein sequence ID" value="CAA25784.1"/>
    <property type="molecule type" value="Genomic_DNA"/>
</dbReference>
<dbReference type="EMBL" id="L10328">
    <property type="protein sequence ID" value="AAA62082.1"/>
    <property type="status" value="ALT_FRAME"/>
    <property type="molecule type" value="Genomic_DNA"/>
</dbReference>
<dbReference type="EMBL" id="L10328">
    <property type="protein sequence ID" value="AAA62081.1"/>
    <property type="status" value="ALT_FRAME"/>
    <property type="molecule type" value="Genomic_DNA"/>
</dbReference>
<dbReference type="EMBL" id="U00096">
    <property type="protein sequence ID" value="AAC76753.1"/>
    <property type="molecule type" value="Genomic_DNA"/>
</dbReference>
<dbReference type="EMBL" id="AP009048">
    <property type="protein sequence ID" value="BAE77558.1"/>
    <property type="molecule type" value="Genomic_DNA"/>
</dbReference>
<dbReference type="PIR" id="C65176">
    <property type="entry name" value="C65176"/>
</dbReference>
<dbReference type="RefSeq" id="NP_418186.1">
    <property type="nucleotide sequence ID" value="NC_000913.3"/>
</dbReference>
<dbReference type="RefSeq" id="WP_000933736.1">
    <property type="nucleotide sequence ID" value="NZ_STEB01000015.1"/>
</dbReference>
<dbReference type="PDB" id="1FWY">
    <property type="method" value="X-ray"/>
    <property type="resolution" value="2.30 A"/>
    <property type="chains" value="A/B=1-331"/>
</dbReference>
<dbReference type="PDB" id="1FXJ">
    <property type="method" value="X-ray"/>
    <property type="resolution" value="2.25 A"/>
    <property type="chains" value="A/B=1-331"/>
</dbReference>
<dbReference type="PDB" id="1HV9">
    <property type="method" value="X-ray"/>
    <property type="resolution" value="2.10 A"/>
    <property type="chains" value="A/B=1-456"/>
</dbReference>
<dbReference type="PDB" id="2OI5">
    <property type="method" value="X-ray"/>
    <property type="resolution" value="2.25 A"/>
    <property type="chains" value="A/B=1-456"/>
</dbReference>
<dbReference type="PDB" id="2OI6">
    <property type="method" value="X-ray"/>
    <property type="resolution" value="2.20 A"/>
    <property type="chains" value="A/B=1-456"/>
</dbReference>
<dbReference type="PDB" id="2OI7">
    <property type="method" value="X-ray"/>
    <property type="resolution" value="2.54 A"/>
    <property type="chains" value="A/B=1-456"/>
</dbReference>
<dbReference type="PDB" id="3TWD">
    <property type="method" value="X-ray"/>
    <property type="resolution" value="1.90 A"/>
    <property type="chains" value="A/B=233-452"/>
</dbReference>
<dbReference type="PDB" id="4AA7">
    <property type="method" value="X-ray"/>
    <property type="resolution" value="2.00 A"/>
    <property type="chains" value="A/B=227-456"/>
</dbReference>
<dbReference type="PDBsum" id="1FWY"/>
<dbReference type="PDBsum" id="1FXJ"/>
<dbReference type="PDBsum" id="1HV9"/>
<dbReference type="PDBsum" id="2OI5"/>
<dbReference type="PDBsum" id="2OI6"/>
<dbReference type="PDBsum" id="2OI7"/>
<dbReference type="PDBsum" id="3TWD"/>
<dbReference type="PDBsum" id="4AA7"/>
<dbReference type="SMR" id="P0ACC7"/>
<dbReference type="BioGRID" id="4262143">
    <property type="interactions" value="327"/>
</dbReference>
<dbReference type="BioGRID" id="852548">
    <property type="interactions" value="1"/>
</dbReference>
<dbReference type="DIP" id="DIP-31844N"/>
<dbReference type="FunCoup" id="P0ACC7">
    <property type="interactions" value="673"/>
</dbReference>
<dbReference type="IntAct" id="P0ACC7">
    <property type="interactions" value="19"/>
</dbReference>
<dbReference type="STRING" id="511145.b3730"/>
<dbReference type="BindingDB" id="P0ACC7"/>
<dbReference type="ChEMBL" id="CHEMBL3414415"/>
<dbReference type="DrugBank" id="DB03814">
    <property type="generic name" value="2-(N-morpholino)ethanesulfonic acid"/>
</dbReference>
<dbReference type="DrugBank" id="DB01992">
    <property type="generic name" value="Coenzyme A"/>
</dbReference>
<dbReference type="DrugBank" id="DB03397">
    <property type="generic name" value="Uridine-Diphosphate-N-Acetylglucosamine"/>
</dbReference>
<dbReference type="jPOST" id="P0ACC7"/>
<dbReference type="PaxDb" id="511145-b3730"/>
<dbReference type="EnsemblBacteria" id="AAC76753">
    <property type="protein sequence ID" value="AAC76753"/>
    <property type="gene ID" value="b3730"/>
</dbReference>
<dbReference type="GeneID" id="75205448"/>
<dbReference type="GeneID" id="948246"/>
<dbReference type="KEGG" id="ecj:JW3708"/>
<dbReference type="KEGG" id="eco:b3730"/>
<dbReference type="KEGG" id="ecoc:C3026_20215"/>
<dbReference type="PATRIC" id="fig|1411691.4.peg.2970"/>
<dbReference type="EchoBASE" id="EB1184"/>
<dbReference type="eggNOG" id="COG1207">
    <property type="taxonomic scope" value="Bacteria"/>
</dbReference>
<dbReference type="HOGENOM" id="CLU_029499_15_2_6"/>
<dbReference type="InParanoid" id="P0ACC7"/>
<dbReference type="OMA" id="TAIVEHK"/>
<dbReference type="OrthoDB" id="9775031at2"/>
<dbReference type="PhylomeDB" id="P0ACC7"/>
<dbReference type="BioCyc" id="EcoCyc:NAG1P-URIDYLTRANS-MONOMER"/>
<dbReference type="BioCyc" id="MetaCyc:NAG1P-URIDYLTRANS-MONOMER"/>
<dbReference type="BRENDA" id="2.3.1.157">
    <property type="organism ID" value="2026"/>
</dbReference>
<dbReference type="BRENDA" id="2.7.7.23">
    <property type="organism ID" value="2026"/>
</dbReference>
<dbReference type="SABIO-RK" id="P0ACC7"/>
<dbReference type="UniPathway" id="UPA00113">
    <property type="reaction ID" value="UER00532"/>
</dbReference>
<dbReference type="UniPathway" id="UPA00113">
    <property type="reaction ID" value="UER00533"/>
</dbReference>
<dbReference type="UniPathway" id="UPA00973"/>
<dbReference type="EvolutionaryTrace" id="P0ACC7"/>
<dbReference type="PRO" id="PR:P0ACC7"/>
<dbReference type="Proteomes" id="UP000000625">
    <property type="component" value="Chromosome"/>
</dbReference>
<dbReference type="GO" id="GO:0005829">
    <property type="term" value="C:cytosol"/>
    <property type="evidence" value="ECO:0000314"/>
    <property type="project" value="EcoCyc"/>
</dbReference>
<dbReference type="GO" id="GO:0016020">
    <property type="term" value="C:membrane"/>
    <property type="evidence" value="ECO:0007669"/>
    <property type="project" value="GOC"/>
</dbReference>
<dbReference type="GO" id="GO:0019134">
    <property type="term" value="F:glucosamine-1-phosphate N-acetyltransferase activity"/>
    <property type="evidence" value="ECO:0000314"/>
    <property type="project" value="EcoCyc"/>
</dbReference>
<dbReference type="GO" id="GO:0042802">
    <property type="term" value="F:identical protein binding"/>
    <property type="evidence" value="ECO:0000314"/>
    <property type="project" value="EcoCyc"/>
</dbReference>
<dbReference type="GO" id="GO:0000287">
    <property type="term" value="F:magnesium ion binding"/>
    <property type="evidence" value="ECO:0000314"/>
    <property type="project" value="EcoCyc"/>
</dbReference>
<dbReference type="GO" id="GO:0003977">
    <property type="term" value="F:UDP-N-acetylglucosamine diphosphorylase activity"/>
    <property type="evidence" value="ECO:0000314"/>
    <property type="project" value="EcoCyc"/>
</dbReference>
<dbReference type="GO" id="GO:0000902">
    <property type="term" value="P:cell morphogenesis"/>
    <property type="evidence" value="ECO:0007669"/>
    <property type="project" value="UniProtKB-UniRule"/>
</dbReference>
<dbReference type="GO" id="GO:0071555">
    <property type="term" value="P:cell wall organization"/>
    <property type="evidence" value="ECO:0007669"/>
    <property type="project" value="UniProtKB-KW"/>
</dbReference>
<dbReference type="GO" id="GO:0009245">
    <property type="term" value="P:lipid A biosynthetic process"/>
    <property type="evidence" value="ECO:0007669"/>
    <property type="project" value="UniProtKB-UniRule"/>
</dbReference>
<dbReference type="GO" id="GO:0009252">
    <property type="term" value="P:peptidoglycan biosynthetic process"/>
    <property type="evidence" value="ECO:0007669"/>
    <property type="project" value="UniProtKB-UniRule"/>
</dbReference>
<dbReference type="GO" id="GO:0008360">
    <property type="term" value="P:regulation of cell shape"/>
    <property type="evidence" value="ECO:0007669"/>
    <property type="project" value="UniProtKB-KW"/>
</dbReference>
<dbReference type="GO" id="GO:0006048">
    <property type="term" value="P:UDP-N-acetylglucosamine biosynthetic process"/>
    <property type="evidence" value="ECO:0000315"/>
    <property type="project" value="EcoCyc"/>
</dbReference>
<dbReference type="CDD" id="cd02540">
    <property type="entry name" value="GT2_GlmU_N_bac"/>
    <property type="match status" value="1"/>
</dbReference>
<dbReference type="CDD" id="cd03353">
    <property type="entry name" value="LbH_GlmU_C"/>
    <property type="match status" value="1"/>
</dbReference>
<dbReference type="FunFam" id="2.160.10.10:FF:000011">
    <property type="entry name" value="Bifunctional protein GlmU"/>
    <property type="match status" value="1"/>
</dbReference>
<dbReference type="FunFam" id="3.90.550.10:FF:000006">
    <property type="entry name" value="Bifunctional protein GlmU"/>
    <property type="match status" value="1"/>
</dbReference>
<dbReference type="Gene3D" id="2.160.10.10">
    <property type="entry name" value="Hexapeptide repeat proteins"/>
    <property type="match status" value="1"/>
</dbReference>
<dbReference type="Gene3D" id="3.90.550.10">
    <property type="entry name" value="Spore Coat Polysaccharide Biosynthesis Protein SpsA, Chain A"/>
    <property type="match status" value="1"/>
</dbReference>
<dbReference type="HAMAP" id="MF_01631">
    <property type="entry name" value="GlmU"/>
    <property type="match status" value="1"/>
</dbReference>
<dbReference type="InterPro" id="IPR005882">
    <property type="entry name" value="Bifunctional_GlmU"/>
</dbReference>
<dbReference type="InterPro" id="IPR050065">
    <property type="entry name" value="GlmU-like"/>
</dbReference>
<dbReference type="InterPro" id="IPR038009">
    <property type="entry name" value="GlmU_C_LbH"/>
</dbReference>
<dbReference type="InterPro" id="IPR001451">
    <property type="entry name" value="Hexapep"/>
</dbReference>
<dbReference type="InterPro" id="IPR018357">
    <property type="entry name" value="Hexapep_transf_CS"/>
</dbReference>
<dbReference type="InterPro" id="IPR025877">
    <property type="entry name" value="MobA-like_NTP_Trfase"/>
</dbReference>
<dbReference type="InterPro" id="IPR029044">
    <property type="entry name" value="Nucleotide-diphossugar_trans"/>
</dbReference>
<dbReference type="InterPro" id="IPR011004">
    <property type="entry name" value="Trimer_LpxA-like_sf"/>
</dbReference>
<dbReference type="NCBIfam" id="TIGR01173">
    <property type="entry name" value="glmU"/>
    <property type="match status" value="1"/>
</dbReference>
<dbReference type="NCBIfam" id="NF006986">
    <property type="entry name" value="PRK09451.1"/>
    <property type="match status" value="1"/>
</dbReference>
<dbReference type="PANTHER" id="PTHR43584:SF3">
    <property type="entry name" value="BIFUNCTIONAL PROTEIN GLMU"/>
    <property type="match status" value="1"/>
</dbReference>
<dbReference type="PANTHER" id="PTHR43584">
    <property type="entry name" value="NUCLEOTIDYL TRANSFERASE"/>
    <property type="match status" value="1"/>
</dbReference>
<dbReference type="Pfam" id="PF00132">
    <property type="entry name" value="Hexapep"/>
    <property type="match status" value="1"/>
</dbReference>
<dbReference type="Pfam" id="PF12804">
    <property type="entry name" value="NTP_transf_3"/>
    <property type="match status" value="1"/>
</dbReference>
<dbReference type="SUPFAM" id="SSF53448">
    <property type="entry name" value="Nucleotide-diphospho-sugar transferases"/>
    <property type="match status" value="1"/>
</dbReference>
<dbReference type="SUPFAM" id="SSF51161">
    <property type="entry name" value="Trimeric LpxA-like enzymes"/>
    <property type="match status" value="1"/>
</dbReference>
<dbReference type="PROSITE" id="PS00101">
    <property type="entry name" value="HEXAPEP_TRANSFERASES"/>
    <property type="match status" value="1"/>
</dbReference>
<keyword id="KW-0002">3D-structure</keyword>
<keyword id="KW-0012">Acyltransferase</keyword>
<keyword id="KW-0133">Cell shape</keyword>
<keyword id="KW-0961">Cell wall biogenesis/degradation</keyword>
<keyword id="KW-0170">Cobalt</keyword>
<keyword id="KW-0963">Cytoplasm</keyword>
<keyword id="KW-0460">Magnesium</keyword>
<keyword id="KW-0479">Metal-binding</keyword>
<keyword id="KW-0511">Multifunctional enzyme</keyword>
<keyword id="KW-0548">Nucleotidyltransferase</keyword>
<keyword id="KW-0573">Peptidoglycan synthesis</keyword>
<keyword id="KW-1185">Reference proteome</keyword>
<keyword id="KW-0677">Repeat</keyword>
<keyword id="KW-0808">Transferase</keyword>